<proteinExistence type="evidence at protein level"/>
<accession>P0CC14</accession>
<organism>
    <name type="scientific">Conus consors</name>
    <name type="common">Singed cone</name>
    <dbReference type="NCBI Taxonomy" id="101297"/>
    <lineage>
        <taxon>Eukaryota</taxon>
        <taxon>Metazoa</taxon>
        <taxon>Spiralia</taxon>
        <taxon>Lophotrochozoa</taxon>
        <taxon>Mollusca</taxon>
        <taxon>Gastropoda</taxon>
        <taxon>Caenogastropoda</taxon>
        <taxon>Neogastropoda</taxon>
        <taxon>Conoidea</taxon>
        <taxon>Conidae</taxon>
        <taxon>Conus</taxon>
        <taxon>Pionoconus</taxon>
    </lineage>
</organism>
<protein>
    <recommendedName>
        <fullName evidence="6 7">Delta-conotoxin-like CnVIC</fullName>
        <shortName evidence="6 7">Delta-CnVIC</shortName>
    </recommendedName>
</protein>
<keyword id="KW-0903">Direct protein sequencing</keyword>
<keyword id="KW-1015">Disulfide bond</keyword>
<keyword id="KW-0379">Hydroxylation</keyword>
<keyword id="KW-0872">Ion channel impairing toxin</keyword>
<keyword id="KW-0960">Knottin</keyword>
<keyword id="KW-0528">Neurotoxin</keyword>
<keyword id="KW-0638">Presynaptic neurotoxin</keyword>
<keyword id="KW-0964">Secreted</keyword>
<keyword id="KW-0800">Toxin</keyword>
<keyword id="KW-0738">Voltage-gated sodium channel impairing toxin</keyword>
<evidence type="ECO:0000250" key="1"/>
<evidence type="ECO:0000250" key="2">
    <source>
        <dbReference type="UniProtKB" id="P0CC15"/>
    </source>
</evidence>
<evidence type="ECO:0000269" key="3">
    <source>
    </source>
</evidence>
<evidence type="ECO:0000269" key="4">
    <source>
    </source>
</evidence>
<evidence type="ECO:0000269" key="5">
    <source ref="1"/>
</evidence>
<evidence type="ECO:0000303" key="6">
    <source>
    </source>
</evidence>
<evidence type="ECO:0000303" key="7">
    <source>
    </source>
</evidence>
<evidence type="ECO:0000305" key="8"/>
<evidence type="ECO:0000305" key="9">
    <source>
    </source>
</evidence>
<comment type="function">
    <text evidence="4">Delta-conotoxins bind to site 6 of voltage-gated sodium channels (Nav) and inhibit the inactivation process. This toxin acts on Nav1.2/SCN2A, Nav1.4/SCN4A, Nav1.5/SCN5A (weak activity), Nav1.6/SCN8A (EC(50)=2.5 uM).</text>
</comment>
<comment type="subcellular location">
    <subcellularLocation>
        <location evidence="3">Secreted</location>
    </subcellularLocation>
</comment>
<comment type="tissue specificity">
    <text evidence="9">Expressed by the venom duct.</text>
</comment>
<comment type="domain">
    <text evidence="1">The presence of a 'disulfide through disulfide knot' structurally defines this protein as a knottin.</text>
</comment>
<comment type="domain">
    <text evidence="8">The cysteine framework is VI/VII (C-C-CC-C-C).</text>
</comment>
<comment type="mass spectrometry">
    <text>Monoisotopic mass.</text>
</comment>
<comment type="mass spectrometry">
    <text>Monoisotopic mass.</text>
</comment>
<comment type="miscellaneous">
    <text evidence="4">Negative results: does not show activity on rNav1.3/SCN3A, Nav1.7/SCN9A, rNav1.8/SCN10A, Kv1.1/KCNA1, Kv1.3/KCNA3, Kv1.4/KCNA4, Kv1.5/KCNA5, hKv11.1/KCNH2/ERG1, shaker and DmNav1/para.</text>
</comment>
<comment type="miscellaneous">
    <text evidence="9">Found in the dissected venom (DV), but not in the injectable (milked) venom (IV).</text>
</comment>
<comment type="similarity">
    <text evidence="8">Belongs to the conotoxin O1 superfamily.</text>
</comment>
<sequence>DECFSPGTFCGIKPGLCCSARCLSFFCISLEF</sequence>
<reference key="1">
    <citation type="thesis" date="1999" institute="University of La Rochelle" country="France">
        <title>Physico-chemical and pharmacological study of new toxins from the piscivorous cone snail Conus consors.</title>
        <authorList>
            <person name="Favreau P."/>
        </authorList>
    </citation>
    <scope>PROTEIN SEQUENCE</scope>
    <scope>HYDROXYLATION AT PRO-6 AND PRO-14</scope>
    <scope>IDENTIFICATION BY MASS SPECTROMETRY</scope>
    <source>
        <tissue>Venom</tissue>
    </source>
</reference>
<reference key="2">
    <citation type="journal article" date="2014" name="J. Biol. Chem.">
        <title>Delta-conotoxins synthesized using an acid-cleavable solubility tag approach reveal key structural determinants for NaV subtype selectivity.</title>
        <authorList>
            <person name="Peigneur S."/>
            <person name="Paolini-Bertrand M."/>
            <person name="Gaertner H."/>
            <person name="Biass D."/>
            <person name="Violette A."/>
            <person name="Stoecklin R."/>
            <person name="Favreau P."/>
            <person name="Tytgat J."/>
            <person name="Hartley O."/>
        </authorList>
    </citation>
    <scope>PROTEIN SEQUENCE</scope>
    <scope>FUNCTION</scope>
    <scope>SYNTHESIS</scope>
    <scope>MASS SPECTROMETRY</scope>
    <scope>DISULFIDE BOND</scope>
    <source>
        <tissue>Venom</tissue>
    </source>
</reference>
<reference key="3">
    <citation type="unpublished observations" date="2011-05">
        <authorList>
            <person name="Biass D."/>
            <person name="Favreau P."/>
        </authorList>
    </citation>
    <scope>SEQUENCE REVISION TO 23</scope>
</reference>
<reference key="4">
    <citation type="journal article" date="2009" name="J. Proteomics">
        <title>Comparative proteomic study of the venom of the piscivorous cone snail Conus consors.</title>
        <authorList>
            <person name="Biass D."/>
            <person name="Dutertre S."/>
            <person name="Gerbault A."/>
            <person name="Menou J.L."/>
            <person name="Offord R."/>
            <person name="Favreau P."/>
            <person name="Stocklin R."/>
        </authorList>
    </citation>
    <scope>MASS SPECTROMETRY</scope>
    <scope>SUBCELLULAR LOCATION</scope>
    <source>
        <tissue>Venom</tissue>
    </source>
</reference>
<name>O16C_CONCN</name>
<dbReference type="SMR" id="P0CC14"/>
<dbReference type="GO" id="GO:0005576">
    <property type="term" value="C:extracellular region"/>
    <property type="evidence" value="ECO:0007669"/>
    <property type="project" value="UniProtKB-SubCell"/>
</dbReference>
<dbReference type="GO" id="GO:0044231">
    <property type="term" value="C:host cell presynaptic membrane"/>
    <property type="evidence" value="ECO:0007669"/>
    <property type="project" value="UniProtKB-KW"/>
</dbReference>
<dbReference type="GO" id="GO:0019871">
    <property type="term" value="F:sodium channel inhibitor activity"/>
    <property type="evidence" value="ECO:0007669"/>
    <property type="project" value="InterPro"/>
</dbReference>
<dbReference type="GO" id="GO:0090729">
    <property type="term" value="F:toxin activity"/>
    <property type="evidence" value="ECO:0007669"/>
    <property type="project" value="UniProtKB-KW"/>
</dbReference>
<dbReference type="InterPro" id="IPR012322">
    <property type="entry name" value="Conotoxin_d-typ_CS"/>
</dbReference>
<dbReference type="PROSITE" id="PS60005">
    <property type="entry name" value="DELTA_CONOTOXIN"/>
    <property type="match status" value="1"/>
</dbReference>
<feature type="peptide" id="PRO_0000390924" description="Delta-conotoxin-like CnVIC">
    <location>
        <begin position="1"/>
        <end position="32"/>
    </location>
</feature>
<feature type="modified residue" description="4-hydroxyproline" evidence="5">
    <location>
        <position position="6"/>
    </location>
</feature>
<feature type="modified residue" description="4-hydroxyproline" evidence="5">
    <location>
        <position position="14"/>
    </location>
</feature>
<feature type="disulfide bond" evidence="2">
    <location>
        <begin position="3"/>
        <end position="18"/>
    </location>
</feature>
<feature type="disulfide bond" evidence="2">
    <location>
        <begin position="10"/>
        <end position="22"/>
    </location>
</feature>
<feature type="disulfide bond" evidence="2">
    <location>
        <begin position="17"/>
        <end position="27"/>
    </location>
</feature>